<gene>
    <name evidence="1" type="primary">era</name>
    <name type="ordered locus">BUAPTUC7_254</name>
</gene>
<proteinExistence type="inferred from homology"/>
<name>ERA_BUCAT</name>
<accession>B8D7F4</accession>
<keyword id="KW-1003">Cell membrane</keyword>
<keyword id="KW-0963">Cytoplasm</keyword>
<keyword id="KW-0342">GTP-binding</keyword>
<keyword id="KW-0472">Membrane</keyword>
<keyword id="KW-0547">Nucleotide-binding</keyword>
<keyword id="KW-0690">Ribosome biogenesis</keyword>
<keyword id="KW-0694">RNA-binding</keyword>
<keyword id="KW-0699">rRNA-binding</keyword>
<comment type="function">
    <text evidence="1">An essential GTPase that binds both GDP and GTP, with rapid nucleotide exchange. Plays a role in 16S rRNA processing and 30S ribosomal subunit biogenesis and possibly also in cell cycle regulation and energy metabolism.</text>
</comment>
<comment type="subunit">
    <text evidence="1">Monomer.</text>
</comment>
<comment type="subcellular location">
    <subcellularLocation>
        <location>Cytoplasm</location>
    </subcellularLocation>
    <subcellularLocation>
        <location evidence="1">Cell membrane</location>
        <topology evidence="1">Peripheral membrane protein</topology>
    </subcellularLocation>
</comment>
<comment type="similarity">
    <text evidence="1 2">Belongs to the TRAFAC class TrmE-Era-EngA-EngB-Septin-like GTPase superfamily. Era GTPase family.</text>
</comment>
<protein>
    <recommendedName>
        <fullName evidence="1">GTPase Era</fullName>
    </recommendedName>
</protein>
<feature type="chain" id="PRO_1000133767" description="GTPase Era">
    <location>
        <begin position="1"/>
        <end position="283"/>
    </location>
</feature>
<feature type="domain" description="Era-type G" evidence="2">
    <location>
        <begin position="7"/>
        <end position="175"/>
    </location>
</feature>
<feature type="domain" description="KH type-2" evidence="1">
    <location>
        <begin position="198"/>
        <end position="283"/>
    </location>
</feature>
<feature type="region of interest" description="G1" evidence="2">
    <location>
        <begin position="15"/>
        <end position="22"/>
    </location>
</feature>
<feature type="region of interest" description="G2" evidence="2">
    <location>
        <begin position="41"/>
        <end position="45"/>
    </location>
</feature>
<feature type="region of interest" description="G3" evidence="2">
    <location>
        <begin position="62"/>
        <end position="65"/>
    </location>
</feature>
<feature type="region of interest" description="G4" evidence="2">
    <location>
        <begin position="124"/>
        <end position="127"/>
    </location>
</feature>
<feature type="region of interest" description="G5" evidence="2">
    <location>
        <begin position="154"/>
        <end position="156"/>
    </location>
</feature>
<feature type="binding site" evidence="1">
    <location>
        <begin position="15"/>
        <end position="22"/>
    </location>
    <ligand>
        <name>GTP</name>
        <dbReference type="ChEBI" id="CHEBI:37565"/>
    </ligand>
</feature>
<feature type="binding site" evidence="1">
    <location>
        <begin position="62"/>
        <end position="66"/>
    </location>
    <ligand>
        <name>GTP</name>
        <dbReference type="ChEBI" id="CHEBI:37565"/>
    </ligand>
</feature>
<feature type="binding site" evidence="1">
    <location>
        <begin position="124"/>
        <end position="127"/>
    </location>
    <ligand>
        <name>GTP</name>
        <dbReference type="ChEBI" id="CHEBI:37565"/>
    </ligand>
</feature>
<sequence length="283" mass="32888">MKIKKKYCGHVIIVGKANVGKSTLLNNIIGKKISIVSRKKNTTQSNITGIKTEDNYQSIYIDTPGVVFDKNNNQMKHHKNNFYQTTQIATLIIFIIDRIDWTIHDEIILNEIKKTKIPILIIINKIDKISNKIILLPFINFLKKKIDFIEILPISAKKISNLILLKNIIKSYLPENCHIYPECYVTTNSDFFTVSEIIREQLILFLGDELPSIIKVEIESFKKKEKIALYIKAIIWVKNVRQKSIVIGHNGEKIKKISMISRNNIEKKFYIKTHLVLWVKDKN</sequence>
<evidence type="ECO:0000255" key="1">
    <source>
        <dbReference type="HAMAP-Rule" id="MF_00367"/>
    </source>
</evidence>
<evidence type="ECO:0000255" key="2">
    <source>
        <dbReference type="PROSITE-ProRule" id="PRU01050"/>
    </source>
</evidence>
<dbReference type="EMBL" id="CP001158">
    <property type="protein sequence ID" value="ACL30069.1"/>
    <property type="molecule type" value="Genomic_DNA"/>
</dbReference>
<dbReference type="RefSeq" id="WP_012619484.1">
    <property type="nucleotide sequence ID" value="NC_011834.1"/>
</dbReference>
<dbReference type="SMR" id="B8D7F4"/>
<dbReference type="KEGG" id="bau:BUAPTUC7_254"/>
<dbReference type="HOGENOM" id="CLU_038009_1_2_6"/>
<dbReference type="GO" id="GO:0005829">
    <property type="term" value="C:cytosol"/>
    <property type="evidence" value="ECO:0007669"/>
    <property type="project" value="TreeGrafter"/>
</dbReference>
<dbReference type="GO" id="GO:0005886">
    <property type="term" value="C:plasma membrane"/>
    <property type="evidence" value="ECO:0007669"/>
    <property type="project" value="UniProtKB-SubCell"/>
</dbReference>
<dbReference type="GO" id="GO:0005525">
    <property type="term" value="F:GTP binding"/>
    <property type="evidence" value="ECO:0007669"/>
    <property type="project" value="UniProtKB-UniRule"/>
</dbReference>
<dbReference type="GO" id="GO:0003924">
    <property type="term" value="F:GTPase activity"/>
    <property type="evidence" value="ECO:0007669"/>
    <property type="project" value="UniProtKB-UniRule"/>
</dbReference>
<dbReference type="GO" id="GO:0043024">
    <property type="term" value="F:ribosomal small subunit binding"/>
    <property type="evidence" value="ECO:0007669"/>
    <property type="project" value="TreeGrafter"/>
</dbReference>
<dbReference type="GO" id="GO:0070181">
    <property type="term" value="F:small ribosomal subunit rRNA binding"/>
    <property type="evidence" value="ECO:0007669"/>
    <property type="project" value="UniProtKB-UniRule"/>
</dbReference>
<dbReference type="GO" id="GO:0000028">
    <property type="term" value="P:ribosomal small subunit assembly"/>
    <property type="evidence" value="ECO:0007669"/>
    <property type="project" value="TreeGrafter"/>
</dbReference>
<dbReference type="CDD" id="cd04163">
    <property type="entry name" value="Era"/>
    <property type="match status" value="1"/>
</dbReference>
<dbReference type="CDD" id="cd22534">
    <property type="entry name" value="KH-II_Era"/>
    <property type="match status" value="1"/>
</dbReference>
<dbReference type="Gene3D" id="3.30.300.20">
    <property type="match status" value="1"/>
</dbReference>
<dbReference type="Gene3D" id="3.40.50.300">
    <property type="entry name" value="P-loop containing nucleotide triphosphate hydrolases"/>
    <property type="match status" value="1"/>
</dbReference>
<dbReference type="HAMAP" id="MF_00367">
    <property type="entry name" value="GTPase_Era"/>
    <property type="match status" value="1"/>
</dbReference>
<dbReference type="InterPro" id="IPR030388">
    <property type="entry name" value="G_ERA_dom"/>
</dbReference>
<dbReference type="InterPro" id="IPR006073">
    <property type="entry name" value="GTP-bd"/>
</dbReference>
<dbReference type="InterPro" id="IPR005662">
    <property type="entry name" value="GTPase_Era-like"/>
</dbReference>
<dbReference type="InterPro" id="IPR015946">
    <property type="entry name" value="KH_dom-like_a/b"/>
</dbReference>
<dbReference type="InterPro" id="IPR004044">
    <property type="entry name" value="KH_dom_type_2"/>
</dbReference>
<dbReference type="InterPro" id="IPR009019">
    <property type="entry name" value="KH_sf_prok-type"/>
</dbReference>
<dbReference type="InterPro" id="IPR027417">
    <property type="entry name" value="P-loop_NTPase"/>
</dbReference>
<dbReference type="InterPro" id="IPR005225">
    <property type="entry name" value="Small_GTP-bd"/>
</dbReference>
<dbReference type="NCBIfam" id="TIGR00436">
    <property type="entry name" value="era"/>
    <property type="match status" value="1"/>
</dbReference>
<dbReference type="NCBIfam" id="NF000908">
    <property type="entry name" value="PRK00089.1"/>
    <property type="match status" value="1"/>
</dbReference>
<dbReference type="NCBIfam" id="TIGR00231">
    <property type="entry name" value="small_GTP"/>
    <property type="match status" value="1"/>
</dbReference>
<dbReference type="PANTHER" id="PTHR42698">
    <property type="entry name" value="GTPASE ERA"/>
    <property type="match status" value="1"/>
</dbReference>
<dbReference type="PANTHER" id="PTHR42698:SF1">
    <property type="entry name" value="GTPASE ERA, MITOCHONDRIAL"/>
    <property type="match status" value="1"/>
</dbReference>
<dbReference type="Pfam" id="PF07650">
    <property type="entry name" value="KH_2"/>
    <property type="match status" value="1"/>
</dbReference>
<dbReference type="Pfam" id="PF01926">
    <property type="entry name" value="MMR_HSR1"/>
    <property type="match status" value="1"/>
</dbReference>
<dbReference type="SUPFAM" id="SSF52540">
    <property type="entry name" value="P-loop containing nucleoside triphosphate hydrolases"/>
    <property type="match status" value="1"/>
</dbReference>
<dbReference type="SUPFAM" id="SSF54814">
    <property type="entry name" value="Prokaryotic type KH domain (KH-domain type II)"/>
    <property type="match status" value="1"/>
</dbReference>
<dbReference type="PROSITE" id="PS51713">
    <property type="entry name" value="G_ERA"/>
    <property type="match status" value="1"/>
</dbReference>
<dbReference type="PROSITE" id="PS50823">
    <property type="entry name" value="KH_TYPE_2"/>
    <property type="match status" value="1"/>
</dbReference>
<organism>
    <name type="scientific">Buchnera aphidicola subsp. Acyrthosiphon pisum (strain Tuc7)</name>
    <dbReference type="NCBI Taxonomy" id="561501"/>
    <lineage>
        <taxon>Bacteria</taxon>
        <taxon>Pseudomonadati</taxon>
        <taxon>Pseudomonadota</taxon>
        <taxon>Gammaproteobacteria</taxon>
        <taxon>Enterobacterales</taxon>
        <taxon>Erwiniaceae</taxon>
        <taxon>Buchnera</taxon>
    </lineage>
</organism>
<reference key="1">
    <citation type="journal article" date="2009" name="Science">
        <title>The dynamics and time scale of ongoing genomic erosion in symbiotic bacteria.</title>
        <authorList>
            <person name="Moran N.A."/>
            <person name="McLaughlin H.J."/>
            <person name="Sorek R."/>
        </authorList>
    </citation>
    <scope>NUCLEOTIDE SEQUENCE [LARGE SCALE GENOMIC DNA]</scope>
    <source>
        <strain>Tuc7</strain>
    </source>
</reference>